<accession>B5FJ99</accession>
<evidence type="ECO:0000255" key="1">
    <source>
        <dbReference type="HAMAP-Rule" id="MF_01005"/>
    </source>
</evidence>
<gene>
    <name evidence="1" type="primary">btuD</name>
    <name type="ordered locus">SeD_A2003</name>
</gene>
<reference key="1">
    <citation type="journal article" date="2011" name="J. Bacteriol.">
        <title>Comparative genomics of 28 Salmonella enterica isolates: evidence for CRISPR-mediated adaptive sublineage evolution.</title>
        <authorList>
            <person name="Fricke W.F."/>
            <person name="Mammel M.K."/>
            <person name="McDermott P.F."/>
            <person name="Tartera C."/>
            <person name="White D.G."/>
            <person name="Leclerc J.E."/>
            <person name="Ravel J."/>
            <person name="Cebula T.A."/>
        </authorList>
    </citation>
    <scope>NUCLEOTIDE SEQUENCE [LARGE SCALE GENOMIC DNA]</scope>
    <source>
        <strain>CT_02021853</strain>
    </source>
</reference>
<sequence length="249" mass="27109">MSQLMQLKDVAESTRLGPLSGEVSAGEILHLVGPNGAGKSTLLARMAGLTSGEGSIRFGGAPLEAWATATLAQHRAYLAQQQNPPFAMPVWHYLTLHQPDKTRTGQLNEVADMLGLGDKLGRSVNQLSGGEWQRVRLAAVVLQIHPDANPVGQLLLLDEPMNSLDVAQQNALDRVLHHLCQAGIAIVMSSHDLNHTLRHAHKAWLLKRGKLIACGRREEVLTPSYLAQAYGLRFRRLDVEGHPMLISAT</sequence>
<name>BTUD_SALDC</name>
<comment type="function">
    <text evidence="1">Part of the ABC transporter complex BtuCDF involved in vitamin B12 import. Responsible for energy coupling to the transport system.</text>
</comment>
<comment type="catalytic activity">
    <reaction evidence="1">
        <text>an R-cob(III)alamin(out) + ATP + H2O = an R-cob(III)alamin(in) + ADP + phosphate + H(+)</text>
        <dbReference type="Rhea" id="RHEA:17873"/>
        <dbReference type="ChEBI" id="CHEBI:15377"/>
        <dbReference type="ChEBI" id="CHEBI:15378"/>
        <dbReference type="ChEBI" id="CHEBI:30616"/>
        <dbReference type="ChEBI" id="CHEBI:43474"/>
        <dbReference type="ChEBI" id="CHEBI:140785"/>
        <dbReference type="ChEBI" id="CHEBI:456216"/>
        <dbReference type="EC" id="7.6.2.8"/>
    </reaction>
</comment>
<comment type="subunit">
    <text evidence="1">The complex is composed of two ATP-binding proteins (BtuD), two transmembrane proteins (BtuC) and a solute-binding protein (BtuF).</text>
</comment>
<comment type="subcellular location">
    <subcellularLocation>
        <location evidence="1">Cell inner membrane</location>
        <topology evidence="1">Peripheral membrane protein</topology>
    </subcellularLocation>
</comment>
<comment type="similarity">
    <text evidence="1">Belongs to the ABC transporter superfamily. Vitamin B12 importer (TC 3.A.1.13.1) family.</text>
</comment>
<proteinExistence type="inferred from homology"/>
<feature type="chain" id="PRO_1000134666" description="Vitamin B12 import ATP-binding protein BtuD">
    <location>
        <begin position="1"/>
        <end position="249"/>
    </location>
</feature>
<feature type="domain" description="ABC transporter" evidence="1">
    <location>
        <begin position="1"/>
        <end position="233"/>
    </location>
</feature>
<feature type="binding site" evidence="1">
    <location>
        <begin position="33"/>
        <end position="40"/>
    </location>
    <ligand>
        <name>ATP</name>
        <dbReference type="ChEBI" id="CHEBI:30616"/>
    </ligand>
</feature>
<organism>
    <name type="scientific">Salmonella dublin (strain CT_02021853)</name>
    <dbReference type="NCBI Taxonomy" id="439851"/>
    <lineage>
        <taxon>Bacteria</taxon>
        <taxon>Pseudomonadati</taxon>
        <taxon>Pseudomonadota</taxon>
        <taxon>Gammaproteobacteria</taxon>
        <taxon>Enterobacterales</taxon>
        <taxon>Enterobacteriaceae</taxon>
        <taxon>Salmonella</taxon>
    </lineage>
</organism>
<keyword id="KW-0067">ATP-binding</keyword>
<keyword id="KW-0997">Cell inner membrane</keyword>
<keyword id="KW-1003">Cell membrane</keyword>
<keyword id="KW-0472">Membrane</keyword>
<keyword id="KW-0547">Nucleotide-binding</keyword>
<keyword id="KW-1278">Translocase</keyword>
<keyword id="KW-0813">Transport</keyword>
<protein>
    <recommendedName>
        <fullName evidence="1">Vitamin B12 import ATP-binding protein BtuD</fullName>
        <ecNumber evidence="1">7.6.2.8</ecNumber>
    </recommendedName>
    <alternativeName>
        <fullName evidence="1">Vitamin B12-transporting ATPase</fullName>
    </alternativeName>
</protein>
<dbReference type="EC" id="7.6.2.8" evidence="1"/>
<dbReference type="EMBL" id="CP001144">
    <property type="protein sequence ID" value="ACH77114.1"/>
    <property type="molecule type" value="Genomic_DNA"/>
</dbReference>
<dbReference type="RefSeq" id="WP_000080607.1">
    <property type="nucleotide sequence ID" value="NC_011205.1"/>
</dbReference>
<dbReference type="SMR" id="B5FJ99"/>
<dbReference type="KEGG" id="sed:SeD_A2003"/>
<dbReference type="HOGENOM" id="CLU_000604_1_11_6"/>
<dbReference type="Proteomes" id="UP000008322">
    <property type="component" value="Chromosome"/>
</dbReference>
<dbReference type="GO" id="GO:0005886">
    <property type="term" value="C:plasma membrane"/>
    <property type="evidence" value="ECO:0007669"/>
    <property type="project" value="UniProtKB-SubCell"/>
</dbReference>
<dbReference type="GO" id="GO:0015420">
    <property type="term" value="F:ABC-type vitamin B12 transporter activity"/>
    <property type="evidence" value="ECO:0007669"/>
    <property type="project" value="UniProtKB-UniRule"/>
</dbReference>
<dbReference type="GO" id="GO:0005524">
    <property type="term" value="F:ATP binding"/>
    <property type="evidence" value="ECO:0007669"/>
    <property type="project" value="UniProtKB-KW"/>
</dbReference>
<dbReference type="GO" id="GO:0016887">
    <property type="term" value="F:ATP hydrolysis activity"/>
    <property type="evidence" value="ECO:0007669"/>
    <property type="project" value="InterPro"/>
</dbReference>
<dbReference type="CDD" id="cd03214">
    <property type="entry name" value="ABC_Iron-Siderophores_B12_Hemin"/>
    <property type="match status" value="1"/>
</dbReference>
<dbReference type="FunFam" id="3.40.50.300:FF:000462">
    <property type="entry name" value="Vitamin B12 import ATP-binding protein BtuD"/>
    <property type="match status" value="1"/>
</dbReference>
<dbReference type="Gene3D" id="3.40.50.300">
    <property type="entry name" value="P-loop containing nucleotide triphosphate hydrolases"/>
    <property type="match status" value="1"/>
</dbReference>
<dbReference type="HAMAP" id="MF_01005">
    <property type="entry name" value="BtuD"/>
    <property type="match status" value="1"/>
</dbReference>
<dbReference type="InterPro" id="IPR003593">
    <property type="entry name" value="AAA+_ATPase"/>
</dbReference>
<dbReference type="InterPro" id="IPR003439">
    <property type="entry name" value="ABC_transporter-like_ATP-bd"/>
</dbReference>
<dbReference type="InterPro" id="IPR017871">
    <property type="entry name" value="ABC_transporter-like_CS"/>
</dbReference>
<dbReference type="InterPro" id="IPR023693">
    <property type="entry name" value="ABC_transptr_BtuD"/>
</dbReference>
<dbReference type="InterPro" id="IPR050153">
    <property type="entry name" value="Metal_Ion_Import_ABC"/>
</dbReference>
<dbReference type="InterPro" id="IPR027417">
    <property type="entry name" value="P-loop_NTPase"/>
</dbReference>
<dbReference type="NCBIfam" id="NF002981">
    <property type="entry name" value="PRK03695.1"/>
    <property type="match status" value="1"/>
</dbReference>
<dbReference type="PANTHER" id="PTHR42734">
    <property type="entry name" value="METAL TRANSPORT SYSTEM ATP-BINDING PROTEIN TM_0124-RELATED"/>
    <property type="match status" value="1"/>
</dbReference>
<dbReference type="PANTHER" id="PTHR42734:SF18">
    <property type="entry name" value="VITAMIN B12 IMPORT ATP-BINDING PROTEIN BTUD"/>
    <property type="match status" value="1"/>
</dbReference>
<dbReference type="Pfam" id="PF00005">
    <property type="entry name" value="ABC_tran"/>
    <property type="match status" value="1"/>
</dbReference>
<dbReference type="SMART" id="SM00382">
    <property type="entry name" value="AAA"/>
    <property type="match status" value="1"/>
</dbReference>
<dbReference type="SUPFAM" id="SSF52540">
    <property type="entry name" value="P-loop containing nucleoside triphosphate hydrolases"/>
    <property type="match status" value="1"/>
</dbReference>
<dbReference type="PROSITE" id="PS00211">
    <property type="entry name" value="ABC_TRANSPORTER_1"/>
    <property type="match status" value="1"/>
</dbReference>
<dbReference type="PROSITE" id="PS50893">
    <property type="entry name" value="ABC_TRANSPORTER_2"/>
    <property type="match status" value="1"/>
</dbReference>